<proteinExistence type="inferred from homology"/>
<gene>
    <name type="ordered locus">MJ0973</name>
</gene>
<feature type="chain" id="PRO_0000100694" description="Uncharacterized protein MJ0973">
    <location>
        <begin position="1"/>
        <end position="411"/>
    </location>
</feature>
<keyword id="KW-0560">Oxidoreductase</keyword>
<keyword id="KW-1185">Reference proteome</keyword>
<name>Y973_METJA</name>
<reference key="1">
    <citation type="journal article" date="1996" name="Science">
        <title>Complete genome sequence of the methanogenic archaeon, Methanococcus jannaschii.</title>
        <authorList>
            <person name="Bult C.J."/>
            <person name="White O."/>
            <person name="Olsen G.J."/>
            <person name="Zhou L."/>
            <person name="Fleischmann R.D."/>
            <person name="Sutton G.G."/>
            <person name="Blake J.A."/>
            <person name="FitzGerald L.M."/>
            <person name="Clayton R.A."/>
            <person name="Gocayne J.D."/>
            <person name="Kerlavage A.R."/>
            <person name="Dougherty B.A."/>
            <person name="Tomb J.-F."/>
            <person name="Adams M.D."/>
            <person name="Reich C.I."/>
            <person name="Overbeek R."/>
            <person name="Kirkness E.F."/>
            <person name="Weinstock K.G."/>
            <person name="Merrick J.M."/>
            <person name="Glodek A."/>
            <person name="Scott J.L."/>
            <person name="Geoghagen N.S.M."/>
            <person name="Weidman J.F."/>
            <person name="Fuhrmann J.L."/>
            <person name="Nguyen D."/>
            <person name="Utterback T.R."/>
            <person name="Kelley J.M."/>
            <person name="Peterson J.D."/>
            <person name="Sadow P.W."/>
            <person name="Hanna M.C."/>
            <person name="Cotton M.D."/>
            <person name="Roberts K.M."/>
            <person name="Hurst M.A."/>
            <person name="Kaine B.P."/>
            <person name="Borodovsky M."/>
            <person name="Klenk H.-P."/>
            <person name="Fraser C.M."/>
            <person name="Smith H.O."/>
            <person name="Woese C.R."/>
            <person name="Venter J.C."/>
        </authorList>
    </citation>
    <scope>NUCLEOTIDE SEQUENCE [LARGE SCALE GENOMIC DNA]</scope>
    <source>
        <strain>ATCC 43067 / DSM 2661 / JAL-1 / JCM 10045 / NBRC 100440</strain>
    </source>
</reference>
<comment type="similarity">
    <text evidence="1">In the C-terminal section; belongs to the PAPS reductase family.</text>
</comment>
<accession>Q58383</accession>
<dbReference type="EMBL" id="L77117">
    <property type="protein sequence ID" value="AAB98978.1"/>
    <property type="molecule type" value="Genomic_DNA"/>
</dbReference>
<dbReference type="PIR" id="E64421">
    <property type="entry name" value="E64421"/>
</dbReference>
<dbReference type="RefSeq" id="WP_010870487.1">
    <property type="nucleotide sequence ID" value="NC_000909.1"/>
</dbReference>
<dbReference type="SMR" id="Q58383"/>
<dbReference type="FunCoup" id="Q58383">
    <property type="interactions" value="4"/>
</dbReference>
<dbReference type="STRING" id="243232.MJ_0973"/>
<dbReference type="PaxDb" id="243232-MJ_0973"/>
<dbReference type="EnsemblBacteria" id="AAB98978">
    <property type="protein sequence ID" value="AAB98978"/>
    <property type="gene ID" value="MJ_0973"/>
</dbReference>
<dbReference type="GeneID" id="1451871"/>
<dbReference type="KEGG" id="mja:MJ_0973"/>
<dbReference type="eggNOG" id="arCOG00074">
    <property type="taxonomic scope" value="Archaea"/>
</dbReference>
<dbReference type="HOGENOM" id="CLU_026622_0_0_2"/>
<dbReference type="InParanoid" id="Q58383"/>
<dbReference type="OrthoDB" id="5817at2157"/>
<dbReference type="PhylomeDB" id="Q58383"/>
<dbReference type="Proteomes" id="UP000000805">
    <property type="component" value="Chromosome"/>
</dbReference>
<dbReference type="GO" id="GO:0016491">
    <property type="term" value="F:oxidoreductase activity"/>
    <property type="evidence" value="ECO:0007669"/>
    <property type="project" value="UniProtKB-KW"/>
</dbReference>
<dbReference type="CDD" id="cd23947">
    <property type="entry name" value="PAPS_reductase-like_YbdN"/>
    <property type="match status" value="1"/>
</dbReference>
<dbReference type="Gene3D" id="3.40.50.620">
    <property type="entry name" value="HUPs"/>
    <property type="match status" value="1"/>
</dbReference>
<dbReference type="InterPro" id="IPR002500">
    <property type="entry name" value="PAPS_reduct_dom"/>
</dbReference>
<dbReference type="InterPro" id="IPR014729">
    <property type="entry name" value="Rossmann-like_a/b/a_fold"/>
</dbReference>
<dbReference type="InterPro" id="IPR050128">
    <property type="entry name" value="Sulfate_adenylyltrnsfr_sub2"/>
</dbReference>
<dbReference type="NCBIfam" id="NF006327">
    <property type="entry name" value="PRK08557.1"/>
    <property type="match status" value="1"/>
</dbReference>
<dbReference type="PANTHER" id="PTHR43196:SF2">
    <property type="entry name" value="PHOSPHOADENOSINE PHOSPHOSULFATE REDUCTASE"/>
    <property type="match status" value="1"/>
</dbReference>
<dbReference type="PANTHER" id="PTHR43196">
    <property type="entry name" value="SULFATE ADENYLYLTRANSFERASE SUBUNIT 2"/>
    <property type="match status" value="1"/>
</dbReference>
<dbReference type="Pfam" id="PF01507">
    <property type="entry name" value="PAPS_reduct"/>
    <property type="match status" value="1"/>
</dbReference>
<dbReference type="SUPFAM" id="SSF52402">
    <property type="entry name" value="Adenine nucleotide alpha hydrolases-like"/>
    <property type="match status" value="1"/>
</dbReference>
<evidence type="ECO:0000305" key="1"/>
<protein>
    <recommendedName>
        <fullName>Uncharacterized protein MJ0973</fullName>
    </recommendedName>
</protein>
<organism>
    <name type="scientific">Methanocaldococcus jannaschii (strain ATCC 43067 / DSM 2661 / JAL-1 / JCM 10045 / NBRC 100440)</name>
    <name type="common">Methanococcus jannaschii</name>
    <dbReference type="NCBI Taxonomy" id="243232"/>
    <lineage>
        <taxon>Archaea</taxon>
        <taxon>Methanobacteriati</taxon>
        <taxon>Methanobacteriota</taxon>
        <taxon>Methanomada group</taxon>
        <taxon>Methanococci</taxon>
        <taxon>Methanococcales</taxon>
        <taxon>Methanocaldococcaceae</taxon>
        <taxon>Methanocaldococcus</taxon>
    </lineage>
</organism>
<sequence length="411" mass="48904">MDDKFASKFEIDVLNKLLNKNFSYDLAIILKKIGGLDYRKKVFINGECIGILEFDLIDLDWKFHPYASYYLIEEPKIKIKPTKRKLKGKKVPVDLIENAEELKDINENDYVGVEVGNYVGVAVKKGDTIKIKDLTLKKELRFEKIEDYLRKNKDRIEKLEKKSLSIIKKYYEMCKNKNYAINTSFSGGKDSSVSTLLANKVIDDLEVIFIDTGLEFKDTIDFVKKFAKKYDLNLVVLKGKNFWEYLEKEGIPTKDYRWCNSVCKLEPLKEYLKKYKRVYTIDGSRRYESFTREKLTYERKSGFIENQINIFPILDWRGTDVWSWIYLNDVIYNELYDKGFERIGCYMCPAALNAEFLRVKELYPELFNKWVDVLKRFGYDEDEILRGFWRWKELPPKMKELKKILENKEKK</sequence>